<sequence length="287" mass="31606">MGQCLGLVQIDQSTVAIKENFGKFSEVLEPGCHFLPWCIGQQIAGYLSLRVKQLDVRCETKTKDNVFVTVVASVQYRALADKASDAFYKLSNTREQIQSYVFDVIRATVPKLNLDDAFEQKNDIAKAVEDELEKAMSAYGYEIVQTLIIDIEPDVHVKRAMNEINAAARLRVAANEKAEAEKILQIKKAEGEAESKYLAGVGIARQRQAIVDGLRDSVLAFSENVPGTTAKDIMDMVLVTQYFDTMKEIGASSKSTSVFIPHGPGAVKDVAAQIRDGLLQANAERND</sequence>
<reference key="1">
    <citation type="journal article" date="2005" name="Nature">
        <title>The map-based sequence of the rice genome.</title>
        <authorList>
            <consortium name="International rice genome sequencing project (IRGSP)"/>
        </authorList>
    </citation>
    <scope>NUCLEOTIDE SEQUENCE [LARGE SCALE GENOMIC DNA]</scope>
    <source>
        <strain>cv. Nipponbare</strain>
    </source>
</reference>
<reference key="2">
    <citation type="journal article" date="2013" name="Rice">
        <title>Improvement of the Oryza sativa Nipponbare reference genome using next generation sequence and optical map data.</title>
        <authorList>
            <person name="Kawahara Y."/>
            <person name="de la Bastide M."/>
            <person name="Hamilton J.P."/>
            <person name="Kanamori H."/>
            <person name="McCombie W.R."/>
            <person name="Ouyang S."/>
            <person name="Schwartz D.C."/>
            <person name="Tanaka T."/>
            <person name="Wu J."/>
            <person name="Zhou S."/>
            <person name="Childs K.L."/>
            <person name="Davidson R.M."/>
            <person name="Lin H."/>
            <person name="Quesada-Ocampo L."/>
            <person name="Vaillancourt B."/>
            <person name="Sakai H."/>
            <person name="Lee S.S."/>
            <person name="Kim J."/>
            <person name="Numa H."/>
            <person name="Itoh T."/>
            <person name="Buell C.R."/>
            <person name="Matsumoto T."/>
        </authorList>
    </citation>
    <scope>GENOME REANNOTATION</scope>
    <source>
        <strain>cv. Nipponbare</strain>
    </source>
</reference>
<reference key="3">
    <citation type="journal article" date="2005" name="PLoS Biol.">
        <title>The genomes of Oryza sativa: a history of duplications.</title>
        <authorList>
            <person name="Yu J."/>
            <person name="Wang J."/>
            <person name="Lin W."/>
            <person name="Li S."/>
            <person name="Li H."/>
            <person name="Zhou J."/>
            <person name="Ni P."/>
            <person name="Dong W."/>
            <person name="Hu S."/>
            <person name="Zeng C."/>
            <person name="Zhang J."/>
            <person name="Zhang Y."/>
            <person name="Li R."/>
            <person name="Xu Z."/>
            <person name="Li S."/>
            <person name="Li X."/>
            <person name="Zheng H."/>
            <person name="Cong L."/>
            <person name="Lin L."/>
            <person name="Yin J."/>
            <person name="Geng J."/>
            <person name="Li G."/>
            <person name="Shi J."/>
            <person name="Liu J."/>
            <person name="Lv H."/>
            <person name="Li J."/>
            <person name="Wang J."/>
            <person name="Deng Y."/>
            <person name="Ran L."/>
            <person name="Shi X."/>
            <person name="Wang X."/>
            <person name="Wu Q."/>
            <person name="Li C."/>
            <person name="Ren X."/>
            <person name="Wang J."/>
            <person name="Wang X."/>
            <person name="Li D."/>
            <person name="Liu D."/>
            <person name="Zhang X."/>
            <person name="Ji Z."/>
            <person name="Zhao W."/>
            <person name="Sun Y."/>
            <person name="Zhang Z."/>
            <person name="Bao J."/>
            <person name="Han Y."/>
            <person name="Dong L."/>
            <person name="Ji J."/>
            <person name="Chen P."/>
            <person name="Wu S."/>
            <person name="Liu J."/>
            <person name="Xiao Y."/>
            <person name="Bu D."/>
            <person name="Tan J."/>
            <person name="Yang L."/>
            <person name="Ye C."/>
            <person name="Zhang J."/>
            <person name="Xu J."/>
            <person name="Zhou Y."/>
            <person name="Yu Y."/>
            <person name="Zhang B."/>
            <person name="Zhuang S."/>
            <person name="Wei H."/>
            <person name="Liu B."/>
            <person name="Lei M."/>
            <person name="Yu H."/>
            <person name="Li Y."/>
            <person name="Xu H."/>
            <person name="Wei S."/>
            <person name="He X."/>
            <person name="Fang L."/>
            <person name="Zhang Z."/>
            <person name="Zhang Y."/>
            <person name="Huang X."/>
            <person name="Su Z."/>
            <person name="Tong W."/>
            <person name="Li J."/>
            <person name="Tong Z."/>
            <person name="Li S."/>
            <person name="Ye J."/>
            <person name="Wang L."/>
            <person name="Fang L."/>
            <person name="Lei T."/>
            <person name="Chen C.-S."/>
            <person name="Chen H.-C."/>
            <person name="Xu Z."/>
            <person name="Li H."/>
            <person name="Huang H."/>
            <person name="Zhang F."/>
            <person name="Xu H."/>
            <person name="Li N."/>
            <person name="Zhao C."/>
            <person name="Li S."/>
            <person name="Dong L."/>
            <person name="Huang Y."/>
            <person name="Li L."/>
            <person name="Xi Y."/>
            <person name="Qi Q."/>
            <person name="Li W."/>
            <person name="Zhang B."/>
            <person name="Hu W."/>
            <person name="Zhang Y."/>
            <person name="Tian X."/>
            <person name="Jiao Y."/>
            <person name="Liang X."/>
            <person name="Jin J."/>
            <person name="Gao L."/>
            <person name="Zheng W."/>
            <person name="Hao B."/>
            <person name="Liu S.-M."/>
            <person name="Wang W."/>
            <person name="Yuan L."/>
            <person name="Cao M."/>
            <person name="McDermott J."/>
            <person name="Samudrala R."/>
            <person name="Wang J."/>
            <person name="Wong G.K.-S."/>
            <person name="Yang H."/>
        </authorList>
    </citation>
    <scope>NUCLEOTIDE SEQUENCE [LARGE SCALE GENOMIC DNA]</scope>
    <source>
        <strain>cv. Nipponbare</strain>
    </source>
</reference>
<comment type="function">
    <text evidence="1">Positive regulator of hypersensitive response (HR)-like cell death. May be involved in potassium ion channel regulation.</text>
</comment>
<comment type="sequence caution" evidence="3">
    <conflict type="erroneous gene model prediction">
        <sequence resource="EMBL-CDS" id="EEE69559"/>
    </conflict>
</comment>
<proteinExistence type="inferred from homology"/>
<gene>
    <name type="primary">HIRL2</name>
    <name evidence="5" type="ordered locus">Os09g0361200</name>
    <name evidence="5" type="ORF">OSNPB_090361200</name>
    <name evidence="4" type="ORF">P0711F01.54</name>
</gene>
<dbReference type="EMBL" id="AP005508">
    <property type="protein sequence ID" value="BAD23328.1"/>
    <property type="molecule type" value="Genomic_DNA"/>
</dbReference>
<dbReference type="EMBL" id="AP014965">
    <property type="protein sequence ID" value="BAT07693.1"/>
    <property type="molecule type" value="Genomic_DNA"/>
</dbReference>
<dbReference type="EMBL" id="CM000146">
    <property type="protein sequence ID" value="EEE69559.1"/>
    <property type="status" value="ALT_SEQ"/>
    <property type="molecule type" value="Genomic_DNA"/>
</dbReference>
<dbReference type="RefSeq" id="XP_015611758.1">
    <property type="nucleotide sequence ID" value="XM_015756272.1"/>
</dbReference>
<dbReference type="SMR" id="Q6K550"/>
<dbReference type="FunCoup" id="Q6K550">
    <property type="interactions" value="6"/>
</dbReference>
<dbReference type="STRING" id="39947.Q6K550"/>
<dbReference type="PaxDb" id="39947-Q6K550"/>
<dbReference type="EnsemblPlants" id="Os09t0361200-01">
    <property type="protein sequence ID" value="Os09t0361200-01"/>
    <property type="gene ID" value="Os09g0361200"/>
</dbReference>
<dbReference type="Gramene" id="Os09t0361200-01">
    <property type="protein sequence ID" value="Os09t0361200-01"/>
    <property type="gene ID" value="Os09g0361200"/>
</dbReference>
<dbReference type="eggNOG" id="KOG2620">
    <property type="taxonomic scope" value="Eukaryota"/>
</dbReference>
<dbReference type="HOGENOM" id="CLU_024949_5_1_1"/>
<dbReference type="InParanoid" id="Q6K550"/>
<dbReference type="OMA" id="WICFENC"/>
<dbReference type="OrthoDB" id="434619at2759"/>
<dbReference type="Proteomes" id="UP000000763">
    <property type="component" value="Chromosome 9"/>
</dbReference>
<dbReference type="Proteomes" id="UP000007752">
    <property type="component" value="Chromosome 9"/>
</dbReference>
<dbReference type="Proteomes" id="UP000059680">
    <property type="component" value="Chromosome 9"/>
</dbReference>
<dbReference type="CDD" id="cd03407">
    <property type="entry name" value="SPFH_like_u4"/>
    <property type="match status" value="1"/>
</dbReference>
<dbReference type="FunFam" id="3.30.479.30:FF:000013">
    <property type="entry name" value="Hypersensitive-induced response protein 1"/>
    <property type="match status" value="1"/>
</dbReference>
<dbReference type="Gene3D" id="3.30.479.30">
    <property type="entry name" value="Band 7 domain"/>
    <property type="match status" value="1"/>
</dbReference>
<dbReference type="InterPro" id="IPR050710">
    <property type="entry name" value="Band7/mec-2_domain"/>
</dbReference>
<dbReference type="InterPro" id="IPR001107">
    <property type="entry name" value="Band_7"/>
</dbReference>
<dbReference type="InterPro" id="IPR036013">
    <property type="entry name" value="Band_7/SPFH_dom_sf"/>
</dbReference>
<dbReference type="PANTHER" id="PTHR43327:SF58">
    <property type="entry name" value="HYPERSENSITIVE-INDUCED RESPONSE PROTEIN-LIKE PROTEIN 2"/>
    <property type="match status" value="1"/>
</dbReference>
<dbReference type="PANTHER" id="PTHR43327">
    <property type="entry name" value="STOMATIN-LIKE PROTEIN 2, MITOCHONDRIAL"/>
    <property type="match status" value="1"/>
</dbReference>
<dbReference type="Pfam" id="PF01145">
    <property type="entry name" value="Band_7"/>
    <property type="match status" value="1"/>
</dbReference>
<dbReference type="SMART" id="SM00244">
    <property type="entry name" value="PHB"/>
    <property type="match status" value="1"/>
</dbReference>
<dbReference type="SUPFAM" id="SSF117892">
    <property type="entry name" value="Band 7/SPFH domain"/>
    <property type="match status" value="1"/>
</dbReference>
<organism>
    <name type="scientific">Oryza sativa subsp. japonica</name>
    <name type="common">Rice</name>
    <dbReference type="NCBI Taxonomy" id="39947"/>
    <lineage>
        <taxon>Eukaryota</taxon>
        <taxon>Viridiplantae</taxon>
        <taxon>Streptophyta</taxon>
        <taxon>Embryophyta</taxon>
        <taxon>Tracheophyta</taxon>
        <taxon>Spermatophyta</taxon>
        <taxon>Magnoliopsida</taxon>
        <taxon>Liliopsida</taxon>
        <taxon>Poales</taxon>
        <taxon>Poaceae</taxon>
        <taxon>BOP clade</taxon>
        <taxon>Oryzoideae</taxon>
        <taxon>Oryzeae</taxon>
        <taxon>Oryzinae</taxon>
        <taxon>Oryza</taxon>
        <taxon>Oryza sativa</taxon>
    </lineage>
</organism>
<name>HIRL2_ORYSJ</name>
<feature type="initiator methionine" description="Removed" evidence="2">
    <location>
        <position position="1"/>
    </location>
</feature>
<feature type="chain" id="PRO_0000439388" description="Hypersensitive-induced response protein-like protein 2" evidence="2">
    <location>
        <begin position="2"/>
        <end position="287"/>
    </location>
</feature>
<feature type="lipid moiety-binding region" description="N-myristoyl glycine" evidence="2">
    <location>
        <position position="2"/>
    </location>
</feature>
<keyword id="KW-0449">Lipoprotein</keyword>
<keyword id="KW-0519">Myristate</keyword>
<keyword id="KW-1185">Reference proteome</keyword>
<protein>
    <recommendedName>
        <fullName>Hypersensitive-induced response protein-like protein 2</fullName>
    </recommendedName>
</protein>
<evidence type="ECO:0000250" key="1">
    <source>
        <dbReference type="UniProtKB" id="Q5GI04"/>
    </source>
</evidence>
<evidence type="ECO:0000255" key="2"/>
<evidence type="ECO:0000305" key="3"/>
<evidence type="ECO:0000312" key="4">
    <source>
        <dbReference type="EMBL" id="BAD23328.1"/>
    </source>
</evidence>
<evidence type="ECO:0000312" key="5">
    <source>
        <dbReference type="EMBL" id="BAT07693.1"/>
    </source>
</evidence>
<accession>Q6K550</accession>
<accession>B9G362</accession>